<reference key="1">
    <citation type="journal article" date="1992" name="Science">
        <title>Carnivorous plants: phylogeny and structural evolution.</title>
        <authorList>
            <person name="Albert V.A."/>
            <person name="Williams S.E."/>
            <person name="Chase M.W."/>
        </authorList>
    </citation>
    <scope>NUCLEOTIDE SEQUENCE [GENOMIC DNA]</scope>
</reference>
<gene>
    <name evidence="1" type="primary">rbcL</name>
</gene>
<keyword id="KW-0113">Calvin cycle</keyword>
<keyword id="KW-0120">Carbon dioxide fixation</keyword>
<keyword id="KW-0150">Chloroplast</keyword>
<keyword id="KW-1015">Disulfide bond</keyword>
<keyword id="KW-0456">Lyase</keyword>
<keyword id="KW-0460">Magnesium</keyword>
<keyword id="KW-0479">Metal-binding</keyword>
<keyword id="KW-0488">Methylation</keyword>
<keyword id="KW-0503">Monooxygenase</keyword>
<keyword id="KW-0560">Oxidoreductase</keyword>
<keyword id="KW-0601">Photorespiration</keyword>
<keyword id="KW-0602">Photosynthesis</keyword>
<keyword id="KW-0934">Plastid</keyword>
<evidence type="ECO:0000255" key="1">
    <source>
        <dbReference type="HAMAP-Rule" id="MF_01338"/>
    </source>
</evidence>
<protein>
    <recommendedName>
        <fullName evidence="1">Ribulose bisphosphate carboxylase large chain</fullName>
        <shortName evidence="1">RuBisCO large subunit</shortName>
        <ecNumber evidence="1">4.1.1.39</ecNumber>
    </recommendedName>
</protein>
<proteinExistence type="inferred from homology"/>
<accession>P28425</accession>
<sequence length="467" mass="51905">SVGFKAGVKEYKLTYYTPEYETKDTDILAAFRVSPQPGVPPEEAGAAVAAESSTGTWTTVWTDGLTNLDRYKGRCYHIDPVLGEEDQYIAYVAYPLDLFEEGSVTNMFTSIVGNVFGFKALRALRLEDLRIPTAYVKTFQGPPHGIQVERDKLNKYGRPLLGCTIKPKLGLSAKNYGRAVYECLRGGLDFTKDDENVNSQPFMRWRDRLLFCAEAIFKSQAETGEIKGHYLNATAGNCEEMMKRAVFARELGVPIVMHDYLTGGFTANTTLASYCRDNGLLLHIHRAMHAVIDRQKNHGIHFRVLAKALRMSGGDHIHSGTVVGKLEGERNITLSFVVLLRDDYIEKDRSRGIFFTQDWVSLPGVLPVASGGIHVWHMPALVEIFGDDSVLQFGGGTLGHPWGNAPGAVANRVSLEACVQARNEGRDLAREGNDIIREACKWSPELAAACEVWKEIKFEFTDMDTLD</sequence>
<geneLocation type="chloroplast"/>
<dbReference type="EC" id="4.1.1.39" evidence="1"/>
<dbReference type="EMBL" id="L01927">
    <property type="protein sequence ID" value="AAA84324.2"/>
    <property type="molecule type" value="Genomic_DNA"/>
</dbReference>
<dbReference type="SMR" id="P28425"/>
<dbReference type="GO" id="GO:0009507">
    <property type="term" value="C:chloroplast"/>
    <property type="evidence" value="ECO:0007669"/>
    <property type="project" value="UniProtKB-SubCell"/>
</dbReference>
<dbReference type="GO" id="GO:0000287">
    <property type="term" value="F:magnesium ion binding"/>
    <property type="evidence" value="ECO:0007669"/>
    <property type="project" value="InterPro"/>
</dbReference>
<dbReference type="GO" id="GO:0004497">
    <property type="term" value="F:monooxygenase activity"/>
    <property type="evidence" value="ECO:0007669"/>
    <property type="project" value="UniProtKB-KW"/>
</dbReference>
<dbReference type="GO" id="GO:0016984">
    <property type="term" value="F:ribulose-bisphosphate carboxylase activity"/>
    <property type="evidence" value="ECO:0007669"/>
    <property type="project" value="UniProtKB-EC"/>
</dbReference>
<dbReference type="GO" id="GO:0009853">
    <property type="term" value="P:photorespiration"/>
    <property type="evidence" value="ECO:0007669"/>
    <property type="project" value="UniProtKB-KW"/>
</dbReference>
<dbReference type="GO" id="GO:0019253">
    <property type="term" value="P:reductive pentose-phosphate cycle"/>
    <property type="evidence" value="ECO:0007669"/>
    <property type="project" value="UniProtKB-KW"/>
</dbReference>
<dbReference type="CDD" id="cd08212">
    <property type="entry name" value="RuBisCO_large_I"/>
    <property type="match status" value="1"/>
</dbReference>
<dbReference type="FunFam" id="3.20.20.110:FF:000001">
    <property type="entry name" value="Ribulose bisphosphate carboxylase large chain"/>
    <property type="match status" value="1"/>
</dbReference>
<dbReference type="FunFam" id="3.30.70.150:FF:000001">
    <property type="entry name" value="Ribulose bisphosphate carboxylase large chain"/>
    <property type="match status" value="1"/>
</dbReference>
<dbReference type="Gene3D" id="3.20.20.110">
    <property type="entry name" value="Ribulose bisphosphate carboxylase, large subunit, C-terminal domain"/>
    <property type="match status" value="1"/>
</dbReference>
<dbReference type="Gene3D" id="3.30.70.150">
    <property type="entry name" value="RuBisCO large subunit, N-terminal domain"/>
    <property type="match status" value="1"/>
</dbReference>
<dbReference type="HAMAP" id="MF_01338">
    <property type="entry name" value="RuBisCO_L_type1"/>
    <property type="match status" value="1"/>
</dbReference>
<dbReference type="InterPro" id="IPR033966">
    <property type="entry name" value="RuBisCO"/>
</dbReference>
<dbReference type="InterPro" id="IPR020878">
    <property type="entry name" value="RuBisCo_large_chain_AS"/>
</dbReference>
<dbReference type="InterPro" id="IPR000685">
    <property type="entry name" value="RuBisCO_lsu_C"/>
</dbReference>
<dbReference type="InterPro" id="IPR036376">
    <property type="entry name" value="RuBisCO_lsu_C_sf"/>
</dbReference>
<dbReference type="InterPro" id="IPR017443">
    <property type="entry name" value="RuBisCO_lsu_fd_N"/>
</dbReference>
<dbReference type="InterPro" id="IPR036422">
    <property type="entry name" value="RuBisCO_lsu_N_sf"/>
</dbReference>
<dbReference type="InterPro" id="IPR020888">
    <property type="entry name" value="RuBisCO_lsuI"/>
</dbReference>
<dbReference type="NCBIfam" id="NF003252">
    <property type="entry name" value="PRK04208.1"/>
    <property type="match status" value="1"/>
</dbReference>
<dbReference type="PANTHER" id="PTHR42704">
    <property type="entry name" value="RIBULOSE BISPHOSPHATE CARBOXYLASE"/>
    <property type="match status" value="1"/>
</dbReference>
<dbReference type="PANTHER" id="PTHR42704:SF15">
    <property type="entry name" value="RIBULOSE BISPHOSPHATE CARBOXYLASE LARGE CHAIN"/>
    <property type="match status" value="1"/>
</dbReference>
<dbReference type="Pfam" id="PF00016">
    <property type="entry name" value="RuBisCO_large"/>
    <property type="match status" value="1"/>
</dbReference>
<dbReference type="Pfam" id="PF02788">
    <property type="entry name" value="RuBisCO_large_N"/>
    <property type="match status" value="1"/>
</dbReference>
<dbReference type="SFLD" id="SFLDG01052">
    <property type="entry name" value="RuBisCO"/>
    <property type="match status" value="1"/>
</dbReference>
<dbReference type="SFLD" id="SFLDS00014">
    <property type="entry name" value="RuBisCO"/>
    <property type="match status" value="1"/>
</dbReference>
<dbReference type="SFLD" id="SFLDG00301">
    <property type="entry name" value="RuBisCO-like_proteins"/>
    <property type="match status" value="1"/>
</dbReference>
<dbReference type="SUPFAM" id="SSF51649">
    <property type="entry name" value="RuBisCo, C-terminal domain"/>
    <property type="match status" value="1"/>
</dbReference>
<dbReference type="SUPFAM" id="SSF54966">
    <property type="entry name" value="RuBisCO, large subunit, small (N-terminal) domain"/>
    <property type="match status" value="1"/>
</dbReference>
<dbReference type="PROSITE" id="PS00157">
    <property type="entry name" value="RUBISCO_LARGE"/>
    <property type="match status" value="1"/>
</dbReference>
<name>RBL_HYDVI</name>
<feature type="chain" id="PRO_0000062494" description="Ribulose bisphosphate carboxylase large chain">
    <location>
        <begin position="1" status="less than"/>
        <end position="467"/>
    </location>
</feature>
<feature type="active site" description="Proton acceptor" evidence="1">
    <location>
        <position position="166"/>
    </location>
</feature>
<feature type="active site" description="Proton acceptor" evidence="1">
    <location>
        <position position="285"/>
    </location>
</feature>
<feature type="binding site" description="in homodimeric partner" evidence="1">
    <location>
        <position position="114"/>
    </location>
    <ligand>
        <name>substrate</name>
    </ligand>
</feature>
<feature type="binding site" evidence="1">
    <location>
        <position position="164"/>
    </location>
    <ligand>
        <name>substrate</name>
    </ligand>
</feature>
<feature type="binding site" evidence="1">
    <location>
        <position position="168"/>
    </location>
    <ligand>
        <name>substrate</name>
    </ligand>
</feature>
<feature type="binding site" description="via carbamate group" evidence="1">
    <location>
        <position position="192"/>
    </location>
    <ligand>
        <name>Mg(2+)</name>
        <dbReference type="ChEBI" id="CHEBI:18420"/>
    </ligand>
</feature>
<feature type="binding site" evidence="1">
    <location>
        <position position="194"/>
    </location>
    <ligand>
        <name>Mg(2+)</name>
        <dbReference type="ChEBI" id="CHEBI:18420"/>
    </ligand>
</feature>
<feature type="binding site" evidence="1">
    <location>
        <position position="195"/>
    </location>
    <ligand>
        <name>Mg(2+)</name>
        <dbReference type="ChEBI" id="CHEBI:18420"/>
    </ligand>
</feature>
<feature type="binding site" evidence="1">
    <location>
        <position position="286"/>
    </location>
    <ligand>
        <name>substrate</name>
    </ligand>
</feature>
<feature type="binding site" evidence="1">
    <location>
        <position position="318"/>
    </location>
    <ligand>
        <name>substrate</name>
    </ligand>
</feature>
<feature type="binding site" evidence="1">
    <location>
        <position position="370"/>
    </location>
    <ligand>
        <name>substrate</name>
    </ligand>
</feature>
<feature type="site" description="Transition state stabilizer" evidence="1">
    <location>
        <position position="325"/>
    </location>
</feature>
<feature type="modified residue" description="N6,N6,N6-trimethyllysine" evidence="1">
    <location>
        <position position="5"/>
    </location>
</feature>
<feature type="modified residue" description="N6-carboxylysine" evidence="1">
    <location>
        <position position="192"/>
    </location>
</feature>
<feature type="disulfide bond" description="Interchain; in linked form" evidence="1">
    <location>
        <position position="238"/>
    </location>
</feature>
<feature type="non-terminal residue">
    <location>
        <position position="1"/>
    </location>
</feature>
<organism>
    <name type="scientific">Hydrophyllum virginianum</name>
    <name type="common">Eastern waterleaf</name>
    <dbReference type="NCBI Taxonomy" id="4134"/>
    <lineage>
        <taxon>Eukaryota</taxon>
        <taxon>Viridiplantae</taxon>
        <taxon>Streptophyta</taxon>
        <taxon>Embryophyta</taxon>
        <taxon>Tracheophyta</taxon>
        <taxon>Spermatophyta</taxon>
        <taxon>Magnoliopsida</taxon>
        <taxon>eudicotyledons</taxon>
        <taxon>Gunneridae</taxon>
        <taxon>Pentapetalae</taxon>
        <taxon>asterids</taxon>
        <taxon>lamiids</taxon>
        <taxon>Boraginales</taxon>
        <taxon>Hydrophyllaceae</taxon>
        <taxon>Hydrophyllum</taxon>
    </lineage>
</organism>
<comment type="function">
    <text evidence="1">RuBisCO catalyzes two reactions: the carboxylation of D-ribulose 1,5-bisphosphate, the primary event in carbon dioxide fixation, as well as the oxidative fragmentation of the pentose substrate in the photorespiration process. Both reactions occur simultaneously and in competition at the same active site.</text>
</comment>
<comment type="catalytic activity">
    <reaction evidence="1">
        <text>2 (2R)-3-phosphoglycerate + 2 H(+) = D-ribulose 1,5-bisphosphate + CO2 + H2O</text>
        <dbReference type="Rhea" id="RHEA:23124"/>
        <dbReference type="ChEBI" id="CHEBI:15377"/>
        <dbReference type="ChEBI" id="CHEBI:15378"/>
        <dbReference type="ChEBI" id="CHEBI:16526"/>
        <dbReference type="ChEBI" id="CHEBI:57870"/>
        <dbReference type="ChEBI" id="CHEBI:58272"/>
        <dbReference type="EC" id="4.1.1.39"/>
    </reaction>
</comment>
<comment type="catalytic activity">
    <reaction evidence="1">
        <text>D-ribulose 1,5-bisphosphate + O2 = 2-phosphoglycolate + (2R)-3-phosphoglycerate + 2 H(+)</text>
        <dbReference type="Rhea" id="RHEA:36631"/>
        <dbReference type="ChEBI" id="CHEBI:15378"/>
        <dbReference type="ChEBI" id="CHEBI:15379"/>
        <dbReference type="ChEBI" id="CHEBI:57870"/>
        <dbReference type="ChEBI" id="CHEBI:58033"/>
        <dbReference type="ChEBI" id="CHEBI:58272"/>
    </reaction>
</comment>
<comment type="cofactor">
    <cofactor evidence="1">
        <name>Mg(2+)</name>
        <dbReference type="ChEBI" id="CHEBI:18420"/>
    </cofactor>
    <text evidence="1">Binds 1 Mg(2+) ion per subunit.</text>
</comment>
<comment type="subunit">
    <text evidence="1">Heterohexadecamer of 8 large chains and 8 small chains; disulfide-linked. The disulfide link is formed within the large subunit homodimers.</text>
</comment>
<comment type="subcellular location">
    <subcellularLocation>
        <location>Plastid</location>
        <location>Chloroplast</location>
    </subcellularLocation>
</comment>
<comment type="PTM">
    <text evidence="1">The disulfide bond which can form in the large chain dimeric partners within the hexadecamer appears to be associated with oxidative stress and protein turnover.</text>
</comment>
<comment type="miscellaneous">
    <text evidence="1">The basic functional RuBisCO is composed of a large chain homodimer in a 'head-to-tail' conformation. In form I RuBisCO this homodimer is arranged in a barrel-like tetramer with the small subunits forming a tetrameric 'cap' on each end of the 'barrel'.</text>
</comment>
<comment type="similarity">
    <text evidence="1">Belongs to the RuBisCO large chain family. Type I subfamily.</text>
</comment>